<comment type="function">
    <text evidence="1">Forms oxaloacetate, a four-carbon dicarboxylic acid source for the tricarboxylic acid cycle.</text>
</comment>
<comment type="catalytic activity">
    <reaction evidence="1">
        <text>oxaloacetate + phosphate = phosphoenolpyruvate + hydrogencarbonate</text>
        <dbReference type="Rhea" id="RHEA:28370"/>
        <dbReference type="ChEBI" id="CHEBI:16452"/>
        <dbReference type="ChEBI" id="CHEBI:17544"/>
        <dbReference type="ChEBI" id="CHEBI:43474"/>
        <dbReference type="ChEBI" id="CHEBI:58702"/>
        <dbReference type="EC" id="4.1.1.31"/>
    </reaction>
</comment>
<comment type="cofactor">
    <cofactor evidence="1">
        <name>Mg(2+)</name>
        <dbReference type="ChEBI" id="CHEBI:18420"/>
    </cofactor>
</comment>
<comment type="similarity">
    <text evidence="1">Belongs to the PEPCase type 1 family.</text>
</comment>
<organism>
    <name type="scientific">Yersinia pseudotuberculosis serotype IB (strain PB1/+)</name>
    <dbReference type="NCBI Taxonomy" id="502801"/>
    <lineage>
        <taxon>Bacteria</taxon>
        <taxon>Pseudomonadati</taxon>
        <taxon>Pseudomonadota</taxon>
        <taxon>Gammaproteobacteria</taxon>
        <taxon>Enterobacterales</taxon>
        <taxon>Yersiniaceae</taxon>
        <taxon>Yersinia</taxon>
    </lineage>
</organism>
<proteinExistence type="inferred from homology"/>
<dbReference type="EC" id="4.1.1.31" evidence="1"/>
<dbReference type="EMBL" id="CP001048">
    <property type="protein sequence ID" value="ACC87112.1"/>
    <property type="molecule type" value="Genomic_DNA"/>
</dbReference>
<dbReference type="RefSeq" id="WP_011191467.1">
    <property type="nucleotide sequence ID" value="NZ_CP009780.1"/>
</dbReference>
<dbReference type="SMR" id="B2JZD9"/>
<dbReference type="GeneID" id="49787921"/>
<dbReference type="KEGG" id="ypb:YPTS_0113"/>
<dbReference type="PATRIC" id="fig|502801.10.peg.3791"/>
<dbReference type="GO" id="GO:0005829">
    <property type="term" value="C:cytosol"/>
    <property type="evidence" value="ECO:0007669"/>
    <property type="project" value="TreeGrafter"/>
</dbReference>
<dbReference type="GO" id="GO:0000287">
    <property type="term" value="F:magnesium ion binding"/>
    <property type="evidence" value="ECO:0007669"/>
    <property type="project" value="UniProtKB-UniRule"/>
</dbReference>
<dbReference type="GO" id="GO:0008964">
    <property type="term" value="F:phosphoenolpyruvate carboxylase activity"/>
    <property type="evidence" value="ECO:0007669"/>
    <property type="project" value="UniProtKB-UniRule"/>
</dbReference>
<dbReference type="GO" id="GO:0015977">
    <property type="term" value="P:carbon fixation"/>
    <property type="evidence" value="ECO:0007669"/>
    <property type="project" value="UniProtKB-UniRule"/>
</dbReference>
<dbReference type="GO" id="GO:0006107">
    <property type="term" value="P:oxaloacetate metabolic process"/>
    <property type="evidence" value="ECO:0007669"/>
    <property type="project" value="UniProtKB-UniRule"/>
</dbReference>
<dbReference type="GO" id="GO:0006099">
    <property type="term" value="P:tricarboxylic acid cycle"/>
    <property type="evidence" value="ECO:0007669"/>
    <property type="project" value="InterPro"/>
</dbReference>
<dbReference type="FunFam" id="1.20.1440.90:FF:000002">
    <property type="entry name" value="Phosphoenolpyruvate carboxylase"/>
    <property type="match status" value="1"/>
</dbReference>
<dbReference type="Gene3D" id="1.20.1440.90">
    <property type="entry name" value="Phosphoenolpyruvate/pyruvate domain"/>
    <property type="match status" value="1"/>
</dbReference>
<dbReference type="HAMAP" id="MF_00595">
    <property type="entry name" value="PEPcase_type1"/>
    <property type="match status" value="1"/>
</dbReference>
<dbReference type="InterPro" id="IPR021135">
    <property type="entry name" value="PEP_COase"/>
</dbReference>
<dbReference type="InterPro" id="IPR022805">
    <property type="entry name" value="PEP_COase_bac/pln-type"/>
</dbReference>
<dbReference type="InterPro" id="IPR018129">
    <property type="entry name" value="PEP_COase_Lys_AS"/>
</dbReference>
<dbReference type="InterPro" id="IPR033129">
    <property type="entry name" value="PEPCASE_His_AS"/>
</dbReference>
<dbReference type="InterPro" id="IPR015813">
    <property type="entry name" value="Pyrv/PenolPyrv_kinase-like_dom"/>
</dbReference>
<dbReference type="NCBIfam" id="NF000584">
    <property type="entry name" value="PRK00009.1"/>
    <property type="match status" value="1"/>
</dbReference>
<dbReference type="PANTHER" id="PTHR30523">
    <property type="entry name" value="PHOSPHOENOLPYRUVATE CARBOXYLASE"/>
    <property type="match status" value="1"/>
</dbReference>
<dbReference type="PANTHER" id="PTHR30523:SF6">
    <property type="entry name" value="PHOSPHOENOLPYRUVATE CARBOXYLASE"/>
    <property type="match status" value="1"/>
</dbReference>
<dbReference type="Pfam" id="PF00311">
    <property type="entry name" value="PEPcase"/>
    <property type="match status" value="1"/>
</dbReference>
<dbReference type="PRINTS" id="PR00150">
    <property type="entry name" value="PEPCARBXLASE"/>
</dbReference>
<dbReference type="SUPFAM" id="SSF51621">
    <property type="entry name" value="Phosphoenolpyruvate/pyruvate domain"/>
    <property type="match status" value="1"/>
</dbReference>
<dbReference type="PROSITE" id="PS00781">
    <property type="entry name" value="PEPCASE_1"/>
    <property type="match status" value="1"/>
</dbReference>
<dbReference type="PROSITE" id="PS00393">
    <property type="entry name" value="PEPCASE_2"/>
    <property type="match status" value="1"/>
</dbReference>
<name>CAPP_YERPB</name>
<feature type="chain" id="PRO_1000129847" description="Phosphoenolpyruvate carboxylase">
    <location>
        <begin position="1"/>
        <end position="878"/>
    </location>
</feature>
<feature type="active site" evidence="1">
    <location>
        <position position="137"/>
    </location>
</feature>
<feature type="active site" evidence="1">
    <location>
        <position position="545"/>
    </location>
</feature>
<evidence type="ECO:0000255" key="1">
    <source>
        <dbReference type="HAMAP-Rule" id="MF_00595"/>
    </source>
</evidence>
<keyword id="KW-0120">Carbon dioxide fixation</keyword>
<keyword id="KW-0456">Lyase</keyword>
<keyword id="KW-0460">Magnesium</keyword>
<sequence>MNEQYSAMRSNVSMLGTLLGDTIKEALGEHILDRVETIRKLSKSSRAGNEASRQELLTTLQNLSNDELLPVARAFSQFLNLTNTAEQYHSISPHGEAASNPEALAQLFTRLKDKKLSDQDMRSAVDDLSIELVLTAHPTEITRRTLIHKLVEVNTCLSQLDHNDLADYERNKIMRRLRQLVAQSWHTDEIRKLRPSPVDEAKWGFAVVENSLWEGVPAFLREFNEQLENSLDYRLPVEAVPIRFTSWMGGDRDGNPNVTAEITRHVLLLSRWKATDLFLRDIQVLVSELSMSECTPELRELAGGEEVLEPYRQLMKNVRTQLTNTQAYLEARLKGERVLPPHDLLVSNDQLWEPLYACYQSLKACGMEIIANGQLLDTLRRVRCFGVPLVRIDVRQESTRHTDAIAELTRYLGLGDYESWSESDKQAFLVRELNSKRPLVPLKWEPSAETQEVLETCRVIAEAPQGSIAAYVISMAKVPSDVLAVHLLLKEAGCPFTLPVAPLFETLDDLNNADDVMTQLLGIDWYRGLIQGKQMVMIGYSDSAKDAGVMAASWAQYRAQDALIKTCEKAGITLTLFHGRGGSIGRGGAPAHAALLSQPPGSLKGGLRVTEQGEMIRFKFGLPEVTISSLALYAGAILEANLLPPPEPKKEWIEVMDLLSDASCDMYRSYVRENPEFVRYFRAATPELELGKLPLGSRPAKRRPDGGVESLRAIPWIFAWTQNRLMLPAWLGAGAGLQRAIDAGKRDVLATMCRDWPFFSTRIGMLEMVFAKADLWLAEYYDQRLVDKSLWPLGQQLRDQLAADIKVVLAIANDDHLMADLPWIAESIALRNVYTDPLNVLQAELLHRSRQQEHPDACVEQALMVTIAGVAAGMRNTG</sequence>
<reference key="1">
    <citation type="submission" date="2008-04" db="EMBL/GenBank/DDBJ databases">
        <title>Complete sequence of Yersinia pseudotuberculosis PB1/+.</title>
        <authorList>
            <person name="Copeland A."/>
            <person name="Lucas S."/>
            <person name="Lapidus A."/>
            <person name="Glavina del Rio T."/>
            <person name="Dalin E."/>
            <person name="Tice H."/>
            <person name="Bruce D."/>
            <person name="Goodwin L."/>
            <person name="Pitluck S."/>
            <person name="Munk A.C."/>
            <person name="Brettin T."/>
            <person name="Detter J.C."/>
            <person name="Han C."/>
            <person name="Tapia R."/>
            <person name="Schmutz J."/>
            <person name="Larimer F."/>
            <person name="Land M."/>
            <person name="Hauser L."/>
            <person name="Challacombe J.F."/>
            <person name="Green L."/>
            <person name="Lindler L.E."/>
            <person name="Nikolich M.P."/>
            <person name="Richardson P."/>
        </authorList>
    </citation>
    <scope>NUCLEOTIDE SEQUENCE [LARGE SCALE GENOMIC DNA]</scope>
    <source>
        <strain>PB1/+</strain>
    </source>
</reference>
<protein>
    <recommendedName>
        <fullName evidence="1">Phosphoenolpyruvate carboxylase</fullName>
        <shortName evidence="1">PEPC</shortName>
        <shortName evidence="1">PEPCase</shortName>
        <ecNumber evidence="1">4.1.1.31</ecNumber>
    </recommendedName>
</protein>
<accession>B2JZD9</accession>
<gene>
    <name evidence="1" type="primary">ppc</name>
    <name type="ordered locus">YPTS_0113</name>
</gene>